<protein>
    <recommendedName>
        <fullName evidence="1">Probable septum site-determining protein MinC</fullName>
    </recommendedName>
</protein>
<gene>
    <name evidence="1" type="primary">minC</name>
    <name type="ordered locus">CPR_2106</name>
</gene>
<organism>
    <name type="scientific">Clostridium perfringens (strain SM101 / Type A)</name>
    <dbReference type="NCBI Taxonomy" id="289380"/>
    <lineage>
        <taxon>Bacteria</taxon>
        <taxon>Bacillati</taxon>
        <taxon>Bacillota</taxon>
        <taxon>Clostridia</taxon>
        <taxon>Eubacteriales</taxon>
        <taxon>Clostridiaceae</taxon>
        <taxon>Clostridium</taxon>
    </lineage>
</organism>
<proteinExistence type="inferred from homology"/>
<feature type="chain" id="PRO_1000047824" description="Probable septum site-determining protein MinC">
    <location>
        <begin position="1"/>
        <end position="211"/>
    </location>
</feature>
<accession>Q0SR42</accession>
<comment type="function">
    <text evidence="1">Cell division inhibitor that blocks the formation of polar Z ring septums. Rapidly oscillates between the poles of the cell to destabilize FtsZ filaments that have formed before they mature into polar Z rings. Prevents FtsZ polymerization.</text>
</comment>
<comment type="subunit">
    <text evidence="1">Interacts with MinD and FtsZ.</text>
</comment>
<comment type="similarity">
    <text evidence="1">Belongs to the MinC family.</text>
</comment>
<evidence type="ECO:0000255" key="1">
    <source>
        <dbReference type="HAMAP-Rule" id="MF_00267"/>
    </source>
</evidence>
<keyword id="KW-0131">Cell cycle</keyword>
<keyword id="KW-0132">Cell division</keyword>
<keyword id="KW-0717">Septation</keyword>
<reference key="1">
    <citation type="journal article" date="2006" name="Genome Res.">
        <title>Skewed genomic variability in strains of the toxigenic bacterial pathogen, Clostridium perfringens.</title>
        <authorList>
            <person name="Myers G.S.A."/>
            <person name="Rasko D.A."/>
            <person name="Cheung J.K."/>
            <person name="Ravel J."/>
            <person name="Seshadri R."/>
            <person name="DeBoy R.T."/>
            <person name="Ren Q."/>
            <person name="Varga J."/>
            <person name="Awad M.M."/>
            <person name="Brinkac L.M."/>
            <person name="Daugherty S.C."/>
            <person name="Haft D.H."/>
            <person name="Dodson R.J."/>
            <person name="Madupu R."/>
            <person name="Nelson W.C."/>
            <person name="Rosovitz M.J."/>
            <person name="Sullivan S.A."/>
            <person name="Khouri H."/>
            <person name="Dimitrov G.I."/>
            <person name="Watkins K.L."/>
            <person name="Mulligan S."/>
            <person name="Benton J."/>
            <person name="Radune D."/>
            <person name="Fisher D.J."/>
            <person name="Atkins H.S."/>
            <person name="Hiscox T."/>
            <person name="Jost B.H."/>
            <person name="Billington S.J."/>
            <person name="Songer J.G."/>
            <person name="McClane B.A."/>
            <person name="Titball R.W."/>
            <person name="Rood J.I."/>
            <person name="Melville S.B."/>
            <person name="Paulsen I.T."/>
        </authorList>
    </citation>
    <scope>NUCLEOTIDE SEQUENCE [LARGE SCALE GENOMIC DNA]</scope>
    <source>
        <strain>SM101 / Type A</strain>
    </source>
</reference>
<dbReference type="EMBL" id="CP000312">
    <property type="protein sequence ID" value="ABG85615.1"/>
    <property type="molecule type" value="Genomic_DNA"/>
</dbReference>
<dbReference type="RefSeq" id="WP_003452463.1">
    <property type="nucleotide sequence ID" value="NZ_CAXVJE010000001.1"/>
</dbReference>
<dbReference type="SMR" id="Q0SR42"/>
<dbReference type="GeneID" id="93001327"/>
<dbReference type="KEGG" id="cpr:CPR_2106"/>
<dbReference type="Proteomes" id="UP000001824">
    <property type="component" value="Chromosome"/>
</dbReference>
<dbReference type="GO" id="GO:0000902">
    <property type="term" value="P:cell morphogenesis"/>
    <property type="evidence" value="ECO:0007669"/>
    <property type="project" value="InterPro"/>
</dbReference>
<dbReference type="GO" id="GO:0000917">
    <property type="term" value="P:division septum assembly"/>
    <property type="evidence" value="ECO:0007669"/>
    <property type="project" value="UniProtKB-KW"/>
</dbReference>
<dbReference type="GO" id="GO:1901891">
    <property type="term" value="P:regulation of cell septum assembly"/>
    <property type="evidence" value="ECO:0007669"/>
    <property type="project" value="InterPro"/>
</dbReference>
<dbReference type="Gene3D" id="2.160.20.70">
    <property type="match status" value="1"/>
</dbReference>
<dbReference type="Gene3D" id="3.30.160.540">
    <property type="match status" value="1"/>
</dbReference>
<dbReference type="HAMAP" id="MF_00267">
    <property type="entry name" value="MinC"/>
    <property type="match status" value="1"/>
</dbReference>
<dbReference type="InterPro" id="IPR016098">
    <property type="entry name" value="CAP/MinC_C"/>
</dbReference>
<dbReference type="InterPro" id="IPR013033">
    <property type="entry name" value="MinC"/>
</dbReference>
<dbReference type="InterPro" id="IPR036145">
    <property type="entry name" value="MinC_C_sf"/>
</dbReference>
<dbReference type="InterPro" id="IPR055219">
    <property type="entry name" value="MinC_N_1"/>
</dbReference>
<dbReference type="InterPro" id="IPR005526">
    <property type="entry name" value="Septum_form_inhib_MinC_C"/>
</dbReference>
<dbReference type="NCBIfam" id="TIGR01222">
    <property type="entry name" value="minC"/>
    <property type="match status" value="1"/>
</dbReference>
<dbReference type="NCBIfam" id="NF001775">
    <property type="entry name" value="PRK00513.1-6"/>
    <property type="match status" value="1"/>
</dbReference>
<dbReference type="PANTHER" id="PTHR34108">
    <property type="entry name" value="SEPTUM SITE-DETERMINING PROTEIN MINC"/>
    <property type="match status" value="1"/>
</dbReference>
<dbReference type="PANTHER" id="PTHR34108:SF1">
    <property type="entry name" value="SEPTUM SITE-DETERMINING PROTEIN MINC"/>
    <property type="match status" value="1"/>
</dbReference>
<dbReference type="Pfam" id="PF03775">
    <property type="entry name" value="MinC_C"/>
    <property type="match status" value="1"/>
</dbReference>
<dbReference type="Pfam" id="PF22642">
    <property type="entry name" value="MinC_N_1"/>
    <property type="match status" value="1"/>
</dbReference>
<dbReference type="SUPFAM" id="SSF63848">
    <property type="entry name" value="Cell-division inhibitor MinC, C-terminal domain"/>
    <property type="match status" value="1"/>
</dbReference>
<name>MINC_CLOPS</name>
<sequence>MRDDRIFIKGNKLGINAIINMDKFGNFDEMLDSLVEKLSRGKKFYKGATLTVTTDLKYINERQISKLKDVLFDEILIKDCIFEERLEKQSSVFSGVYEGRTKFVRKTVRSGQCLNYAGNLIIIGDVNNGGEVRAHGNVIVLGDLKGKVFAGDNGNENAIIAAYSLEPELISISGKITISPDDFEKTGYPEVARLNENNIIVEPYLPDKYSY</sequence>